<protein>
    <recommendedName>
        <fullName evidence="1">2,3-bisphosphoglycerate-dependent phosphoglycerate mutase</fullName>
        <shortName evidence="1">BPG-dependent PGAM</shortName>
        <shortName evidence="1">PGAM</shortName>
        <shortName evidence="1">Phosphoglyceromutase</shortName>
        <shortName evidence="1">dPGM</shortName>
        <ecNumber evidence="1">5.4.2.11</ecNumber>
    </recommendedName>
</protein>
<proteinExistence type="inferred from homology"/>
<feature type="chain" id="PRO_1000064027" description="2,3-bisphosphoglycerate-dependent phosphoglycerate mutase">
    <location>
        <begin position="1"/>
        <end position="248"/>
    </location>
</feature>
<feature type="active site" description="Tele-phosphohistidine intermediate" evidence="1">
    <location>
        <position position="10"/>
    </location>
</feature>
<feature type="active site" description="Proton donor/acceptor" evidence="1">
    <location>
        <position position="88"/>
    </location>
</feature>
<feature type="binding site" evidence="1">
    <location>
        <begin position="9"/>
        <end position="16"/>
    </location>
    <ligand>
        <name>substrate</name>
    </ligand>
</feature>
<feature type="binding site" evidence="1">
    <location>
        <begin position="22"/>
        <end position="23"/>
    </location>
    <ligand>
        <name>substrate</name>
    </ligand>
</feature>
<feature type="binding site" evidence="1">
    <location>
        <position position="61"/>
    </location>
    <ligand>
        <name>substrate</name>
    </ligand>
</feature>
<feature type="binding site" evidence="1">
    <location>
        <begin position="88"/>
        <end position="91"/>
    </location>
    <ligand>
        <name>substrate</name>
    </ligand>
</feature>
<feature type="binding site" evidence="1">
    <location>
        <position position="99"/>
    </location>
    <ligand>
        <name>substrate</name>
    </ligand>
</feature>
<feature type="binding site" evidence="1">
    <location>
        <begin position="115"/>
        <end position="116"/>
    </location>
    <ligand>
        <name>substrate</name>
    </ligand>
</feature>
<feature type="binding site" evidence="1">
    <location>
        <begin position="183"/>
        <end position="184"/>
    </location>
    <ligand>
        <name>substrate</name>
    </ligand>
</feature>
<feature type="site" description="Transition state stabilizer" evidence="1">
    <location>
        <position position="182"/>
    </location>
</feature>
<dbReference type="EC" id="5.4.2.11" evidence="1"/>
<dbReference type="EMBL" id="CP000454">
    <property type="protein sequence ID" value="ABK02119.1"/>
    <property type="molecule type" value="Genomic_DNA"/>
</dbReference>
<dbReference type="RefSeq" id="WP_011690587.1">
    <property type="nucleotide sequence ID" value="NC_008541.1"/>
</dbReference>
<dbReference type="SMR" id="A0JSU9"/>
<dbReference type="STRING" id="290399.Arth_0721"/>
<dbReference type="KEGG" id="art:Arth_0721"/>
<dbReference type="eggNOG" id="COG0588">
    <property type="taxonomic scope" value="Bacteria"/>
</dbReference>
<dbReference type="HOGENOM" id="CLU_033323_1_1_11"/>
<dbReference type="OrthoDB" id="9781415at2"/>
<dbReference type="UniPathway" id="UPA00109">
    <property type="reaction ID" value="UER00186"/>
</dbReference>
<dbReference type="Proteomes" id="UP000000754">
    <property type="component" value="Chromosome"/>
</dbReference>
<dbReference type="GO" id="GO:0004619">
    <property type="term" value="F:phosphoglycerate mutase activity"/>
    <property type="evidence" value="ECO:0007669"/>
    <property type="project" value="UniProtKB-EC"/>
</dbReference>
<dbReference type="GO" id="GO:0006094">
    <property type="term" value="P:gluconeogenesis"/>
    <property type="evidence" value="ECO:0007669"/>
    <property type="project" value="UniProtKB-UniRule"/>
</dbReference>
<dbReference type="GO" id="GO:0006096">
    <property type="term" value="P:glycolytic process"/>
    <property type="evidence" value="ECO:0007669"/>
    <property type="project" value="UniProtKB-UniRule"/>
</dbReference>
<dbReference type="CDD" id="cd07067">
    <property type="entry name" value="HP_PGM_like"/>
    <property type="match status" value="1"/>
</dbReference>
<dbReference type="FunFam" id="3.40.50.1240:FF:000012">
    <property type="entry name" value="Phosphoglycerate mutase 1"/>
    <property type="match status" value="1"/>
</dbReference>
<dbReference type="Gene3D" id="3.40.50.1240">
    <property type="entry name" value="Phosphoglycerate mutase-like"/>
    <property type="match status" value="1"/>
</dbReference>
<dbReference type="HAMAP" id="MF_01039">
    <property type="entry name" value="PGAM_GpmA"/>
    <property type="match status" value="1"/>
</dbReference>
<dbReference type="InterPro" id="IPR013078">
    <property type="entry name" value="His_Pase_superF_clade-1"/>
</dbReference>
<dbReference type="InterPro" id="IPR029033">
    <property type="entry name" value="His_PPase_superfam"/>
</dbReference>
<dbReference type="InterPro" id="IPR005952">
    <property type="entry name" value="Phosphogly_mut1"/>
</dbReference>
<dbReference type="NCBIfam" id="TIGR01258">
    <property type="entry name" value="pgm_1"/>
    <property type="match status" value="1"/>
</dbReference>
<dbReference type="NCBIfam" id="NF010713">
    <property type="entry name" value="PRK14115.1"/>
    <property type="match status" value="1"/>
</dbReference>
<dbReference type="NCBIfam" id="NF010718">
    <property type="entry name" value="PRK14120.1"/>
    <property type="match status" value="1"/>
</dbReference>
<dbReference type="PANTHER" id="PTHR11931">
    <property type="entry name" value="PHOSPHOGLYCERATE MUTASE"/>
    <property type="match status" value="1"/>
</dbReference>
<dbReference type="Pfam" id="PF00300">
    <property type="entry name" value="His_Phos_1"/>
    <property type="match status" value="1"/>
</dbReference>
<dbReference type="PIRSF" id="PIRSF000709">
    <property type="entry name" value="6PFK_2-Ptase"/>
    <property type="match status" value="1"/>
</dbReference>
<dbReference type="SMART" id="SM00855">
    <property type="entry name" value="PGAM"/>
    <property type="match status" value="1"/>
</dbReference>
<dbReference type="SUPFAM" id="SSF53254">
    <property type="entry name" value="Phosphoglycerate mutase-like"/>
    <property type="match status" value="1"/>
</dbReference>
<sequence length="248" mass="27832">MTYKLILLRHGHSEWNAKNLFTGWVDVDLNDQGREEAARGGELLVENNVLPDVLYTSLLKRAINTANIALDKADRGWIPVKRDWRLNERHYGALQGKDKAQTLAEYGEEQFMEWRRSYDTPPPPLDDDSEFSQAHDPRYADLGDALPRTECLKDVLIRLMPYWESDIKEDLKAGKTVLVTAHGNSLRALVKHLDGISDEAIAGLNIPTGIPLVYDLDENFKPLNPGGTYLDPEAAAESIKAVANQGKK</sequence>
<organism>
    <name type="scientific">Arthrobacter sp. (strain FB24)</name>
    <dbReference type="NCBI Taxonomy" id="290399"/>
    <lineage>
        <taxon>Bacteria</taxon>
        <taxon>Bacillati</taxon>
        <taxon>Actinomycetota</taxon>
        <taxon>Actinomycetes</taxon>
        <taxon>Micrococcales</taxon>
        <taxon>Micrococcaceae</taxon>
        <taxon>Arthrobacter</taxon>
    </lineage>
</organism>
<reference key="1">
    <citation type="journal article" date="2013" name="Stand. Genomic Sci.">
        <title>Complete genome sequence of Arthrobacter sp. strain FB24.</title>
        <authorList>
            <person name="Nakatsu C.H."/>
            <person name="Barabote R."/>
            <person name="Thompson S."/>
            <person name="Bruce D."/>
            <person name="Detter C."/>
            <person name="Brettin T."/>
            <person name="Han C."/>
            <person name="Beasley F."/>
            <person name="Chen W."/>
            <person name="Konopka A."/>
            <person name="Xie G."/>
        </authorList>
    </citation>
    <scope>NUCLEOTIDE SEQUENCE [LARGE SCALE GENOMIC DNA]</scope>
    <source>
        <strain>FB24</strain>
    </source>
</reference>
<keyword id="KW-0312">Gluconeogenesis</keyword>
<keyword id="KW-0324">Glycolysis</keyword>
<keyword id="KW-0413">Isomerase</keyword>
<keyword id="KW-1185">Reference proteome</keyword>
<accession>A0JSU9</accession>
<evidence type="ECO:0000255" key="1">
    <source>
        <dbReference type="HAMAP-Rule" id="MF_01039"/>
    </source>
</evidence>
<comment type="function">
    <text evidence="1">Catalyzes the interconversion of 2-phosphoglycerate and 3-phosphoglycerate.</text>
</comment>
<comment type="catalytic activity">
    <reaction evidence="1">
        <text>(2R)-2-phosphoglycerate = (2R)-3-phosphoglycerate</text>
        <dbReference type="Rhea" id="RHEA:15901"/>
        <dbReference type="ChEBI" id="CHEBI:58272"/>
        <dbReference type="ChEBI" id="CHEBI:58289"/>
        <dbReference type="EC" id="5.4.2.11"/>
    </reaction>
</comment>
<comment type="pathway">
    <text evidence="1">Carbohydrate degradation; glycolysis; pyruvate from D-glyceraldehyde 3-phosphate: step 3/5.</text>
</comment>
<comment type="similarity">
    <text evidence="1">Belongs to the phosphoglycerate mutase family. BPG-dependent PGAM subfamily.</text>
</comment>
<name>GPMA_ARTS2</name>
<gene>
    <name evidence="1" type="primary">gpmA</name>
    <name type="ordered locus">Arth_0721</name>
</gene>